<name>ZDHC3_HUMAN</name>
<feature type="chain" id="PRO_0000422064" description="Palmitoyltransferase ZDHHC3">
    <location>
        <begin position="1"/>
        <end position="299"/>
    </location>
</feature>
<feature type="topological domain" description="Cytoplasmic" evidence="3">
    <location>
        <begin position="1"/>
        <end position="47"/>
    </location>
</feature>
<feature type="transmembrane region" description="Helical" evidence="3">
    <location>
        <begin position="48"/>
        <end position="68"/>
    </location>
</feature>
<feature type="topological domain" description="Extracellular" evidence="3">
    <location>
        <begin position="69"/>
        <end position="72"/>
    </location>
</feature>
<feature type="transmembrane region" description="Helical" evidence="3">
    <location>
        <begin position="73"/>
        <end position="93"/>
    </location>
</feature>
<feature type="topological domain" description="Cytoplasmic" evidence="3">
    <location>
        <begin position="94"/>
        <end position="171"/>
    </location>
</feature>
<feature type="transmembrane region" description="Helical" evidence="3">
    <location>
        <begin position="172"/>
        <end position="192"/>
    </location>
</feature>
<feature type="topological domain" description="Extracellular" evidence="3">
    <location>
        <begin position="193"/>
        <end position="214"/>
    </location>
</feature>
<feature type="transmembrane region" description="Helical" evidence="3">
    <location>
        <begin position="215"/>
        <end position="235"/>
    </location>
</feature>
<feature type="topological domain" description="Cytoplasmic" evidence="3">
    <location>
        <begin position="236"/>
        <end position="299"/>
    </location>
</feature>
<feature type="domain" description="DHHC" evidence="4">
    <location>
        <begin position="127"/>
        <end position="177"/>
    </location>
</feature>
<feature type="active site" description="S-palmitoyl cysteine intermediate" evidence="4 18 19">
    <location>
        <position position="157"/>
    </location>
</feature>
<feature type="modified residue" description="Phosphotyrosine" evidence="2">
    <location>
        <position position="18"/>
    </location>
</feature>
<feature type="lipid moiety-binding region" description="S-palmitoyl cysteine" evidence="2">
    <location>
        <position position="146"/>
    </location>
</feature>
<feature type="splice variant" id="VSP_006934" description="In isoform 2." evidence="14 15">
    <original>K</original>
    <variation>TYGLNREEMAETGISLHEKMQPLNFSSTE</variation>
    <location>
        <position position="204"/>
    </location>
</feature>
<feature type="mutagenesis site" description="Probable loss of protein-cysteine S-palmitoyltransferase activity. Loss of function in the TRAIL-activated apoptotic signaling pathway." evidence="8">
    <original>H</original>
    <variation>A</variation>
    <location>
        <position position="155"/>
    </location>
</feature>
<feature type="mutagenesis site" description="Probable loss of protein-cysteine S-palmitoyltransferase activity. Loss of function in the TRAIL-activated apoptotic signaling pathway. No effect on binding of the TNFRSF10A substrate." evidence="8 12">
    <original>C</original>
    <variation>S</variation>
    <location>
        <position position="157"/>
    </location>
</feature>
<feature type="mutagenesis site" description="Impaired localization leading to localization to the endoplasmic reticulum." evidence="7">
    <original>V</original>
    <variation>VEKKNR</variation>
    <variation>VKKKEK</variation>
    <variation>VKGKRD</variation>
    <location>
        <position position="299"/>
    </location>
</feature>
<proteinExistence type="evidence at protein level"/>
<dbReference type="EC" id="2.3.1.225" evidence="7 10 13 19"/>
<dbReference type="EC" id="2.3.1.-" evidence="2"/>
<dbReference type="EMBL" id="AF247703">
    <property type="protein sequence ID" value="AAF63570.1"/>
    <property type="molecule type" value="mRNA"/>
</dbReference>
<dbReference type="EMBL" id="AF441791">
    <property type="protein sequence ID" value="AAL34547.1"/>
    <property type="molecule type" value="mRNA"/>
</dbReference>
<dbReference type="EMBL" id="BC015467">
    <property type="protein sequence ID" value="AAH15467.1"/>
    <property type="molecule type" value="mRNA"/>
</dbReference>
<dbReference type="EMBL" id="AY605661">
    <property type="protein sequence ID" value="AAV83779.1"/>
    <property type="molecule type" value="mRNA"/>
</dbReference>
<dbReference type="CCDS" id="CCDS2724.1">
    <molecule id="Q9NYG2-2"/>
</dbReference>
<dbReference type="CCDS" id="CCDS46811.1">
    <molecule id="Q9NYG2-1"/>
</dbReference>
<dbReference type="RefSeq" id="NP_001128651.1">
    <molecule id="Q9NYG2-1"/>
    <property type="nucleotide sequence ID" value="NM_001135179.2"/>
</dbReference>
<dbReference type="RefSeq" id="NP_001336309.1">
    <molecule id="Q9NYG2-1"/>
    <property type="nucleotide sequence ID" value="NM_001349380.2"/>
</dbReference>
<dbReference type="RefSeq" id="NP_001336310.1">
    <molecule id="Q9NYG2-1"/>
    <property type="nucleotide sequence ID" value="NM_001349381.2"/>
</dbReference>
<dbReference type="RefSeq" id="NP_057682.1">
    <molecule id="Q9NYG2-2"/>
    <property type="nucleotide sequence ID" value="NM_016598.3"/>
</dbReference>
<dbReference type="RefSeq" id="XP_016862055.1">
    <property type="nucleotide sequence ID" value="XM_017006566.1"/>
</dbReference>
<dbReference type="RefSeq" id="XP_016862056.1">
    <property type="nucleotide sequence ID" value="XM_017006567.1"/>
</dbReference>
<dbReference type="SMR" id="Q9NYG2"/>
<dbReference type="BioGRID" id="119455">
    <property type="interactions" value="34"/>
</dbReference>
<dbReference type="FunCoup" id="Q9NYG2">
    <property type="interactions" value="1591"/>
</dbReference>
<dbReference type="IntAct" id="Q9NYG2">
    <property type="interactions" value="16"/>
</dbReference>
<dbReference type="MINT" id="Q9NYG2"/>
<dbReference type="STRING" id="9606.ENSP00000345268"/>
<dbReference type="GuidetoPHARMACOLOGY" id="3271"/>
<dbReference type="GlyGen" id="Q9NYG2">
    <property type="glycosylation" value="1 site"/>
</dbReference>
<dbReference type="iPTMnet" id="Q9NYG2"/>
<dbReference type="PhosphoSitePlus" id="Q9NYG2"/>
<dbReference type="SwissPalm" id="Q9NYG2"/>
<dbReference type="BioMuta" id="ZDHHC3"/>
<dbReference type="DMDM" id="476007823"/>
<dbReference type="jPOST" id="Q9NYG2"/>
<dbReference type="MassIVE" id="Q9NYG2"/>
<dbReference type="PaxDb" id="9606-ENSP00000296127"/>
<dbReference type="PeptideAtlas" id="Q9NYG2"/>
<dbReference type="ProteomicsDB" id="83225">
    <molecule id="Q9NYG2-1"/>
</dbReference>
<dbReference type="ProteomicsDB" id="83226">
    <molecule id="Q9NYG2-2"/>
</dbReference>
<dbReference type="Antibodypedia" id="3251">
    <property type="antibodies" value="139 antibodies from 21 providers"/>
</dbReference>
<dbReference type="DNASU" id="51304"/>
<dbReference type="Ensembl" id="ENST00000296127.7">
    <molecule id="Q9NYG2-2"/>
    <property type="protein sequence ID" value="ENSP00000296127.3"/>
    <property type="gene ID" value="ENSG00000163812.16"/>
</dbReference>
<dbReference type="Ensembl" id="ENST00000424952.7">
    <molecule id="Q9NYG2-1"/>
    <property type="protein sequence ID" value="ENSP00000395502.2"/>
    <property type="gene ID" value="ENSG00000163812.16"/>
</dbReference>
<dbReference type="GeneID" id="51304"/>
<dbReference type="KEGG" id="hsa:51304"/>
<dbReference type="MANE-Select" id="ENST00000424952.7">
    <property type="protein sequence ID" value="ENSP00000395502.2"/>
    <property type="RefSeq nucleotide sequence ID" value="NM_001135179.2"/>
    <property type="RefSeq protein sequence ID" value="NP_001128651.1"/>
</dbReference>
<dbReference type="UCSC" id="uc003cod.4">
    <molecule id="Q9NYG2-1"/>
    <property type="organism name" value="human"/>
</dbReference>
<dbReference type="AGR" id="HGNC:18470"/>
<dbReference type="CTD" id="51304"/>
<dbReference type="DisGeNET" id="51304"/>
<dbReference type="GeneCards" id="ZDHHC3"/>
<dbReference type="HGNC" id="HGNC:18470">
    <property type="gene designation" value="ZDHHC3"/>
</dbReference>
<dbReference type="HPA" id="ENSG00000163812">
    <property type="expression patterns" value="Low tissue specificity"/>
</dbReference>
<dbReference type="neXtProt" id="NX_Q9NYG2"/>
<dbReference type="OpenTargets" id="ENSG00000163812"/>
<dbReference type="PharmGKB" id="PA38544"/>
<dbReference type="VEuPathDB" id="HostDB:ENSG00000163812"/>
<dbReference type="eggNOG" id="KOG1311">
    <property type="taxonomic scope" value="Eukaryota"/>
</dbReference>
<dbReference type="GeneTree" id="ENSGT00940000155721"/>
<dbReference type="HOGENOM" id="CLU_048061_1_1_1"/>
<dbReference type="InParanoid" id="Q9NYG2"/>
<dbReference type="OrthoDB" id="331948at2759"/>
<dbReference type="PAN-GO" id="Q9NYG2">
    <property type="GO annotations" value="5 GO annotations based on evolutionary models"/>
</dbReference>
<dbReference type="TreeFam" id="TF319798"/>
<dbReference type="BRENDA" id="2.3.1.225">
    <property type="organism ID" value="2681"/>
</dbReference>
<dbReference type="PathwayCommons" id="Q9NYG2"/>
<dbReference type="Reactome" id="R-HSA-9694548">
    <property type="pathway name" value="Maturation of spike protein"/>
</dbReference>
<dbReference type="SignaLink" id="Q9NYG2"/>
<dbReference type="BioGRID-ORCS" id="51304">
    <property type="hits" value="10 hits in 1155 CRISPR screens"/>
</dbReference>
<dbReference type="ChiTaRS" id="ZDHHC3">
    <property type="organism name" value="human"/>
</dbReference>
<dbReference type="GeneWiki" id="ZDHHC3"/>
<dbReference type="GenomeRNAi" id="51304"/>
<dbReference type="Pharos" id="Q9NYG2">
    <property type="development level" value="Tbio"/>
</dbReference>
<dbReference type="PRO" id="PR:Q9NYG2"/>
<dbReference type="Proteomes" id="UP000005640">
    <property type="component" value="Chromosome 3"/>
</dbReference>
<dbReference type="RNAct" id="Q9NYG2">
    <property type="molecule type" value="protein"/>
</dbReference>
<dbReference type="Bgee" id="ENSG00000163812">
    <property type="expression patterns" value="Expressed in left testis and 205 other cell types or tissues"/>
</dbReference>
<dbReference type="ExpressionAtlas" id="Q9NYG2">
    <property type="expression patterns" value="baseline and differential"/>
</dbReference>
<dbReference type="GO" id="GO:0005783">
    <property type="term" value="C:endoplasmic reticulum"/>
    <property type="evidence" value="ECO:0000318"/>
    <property type="project" value="GO_Central"/>
</dbReference>
<dbReference type="GO" id="GO:0005794">
    <property type="term" value="C:Golgi apparatus"/>
    <property type="evidence" value="ECO:0000314"/>
    <property type="project" value="UniProtKB"/>
</dbReference>
<dbReference type="GO" id="GO:0000139">
    <property type="term" value="C:Golgi membrane"/>
    <property type="evidence" value="ECO:0000304"/>
    <property type="project" value="Reactome"/>
</dbReference>
<dbReference type="GO" id="GO:0016020">
    <property type="term" value="C:membrane"/>
    <property type="evidence" value="ECO:0007005"/>
    <property type="project" value="UniProtKB"/>
</dbReference>
<dbReference type="GO" id="GO:0016409">
    <property type="term" value="F:palmitoyltransferase activity"/>
    <property type="evidence" value="ECO:0000314"/>
    <property type="project" value="UniProtKB"/>
</dbReference>
<dbReference type="GO" id="GO:0042803">
    <property type="term" value="F:protein homodimerization activity"/>
    <property type="evidence" value="ECO:0000250"/>
    <property type="project" value="UniProtKB"/>
</dbReference>
<dbReference type="GO" id="GO:0019705">
    <property type="term" value="F:protein-cysteine S-myristoyltransferase activity"/>
    <property type="evidence" value="ECO:0007669"/>
    <property type="project" value="RHEA"/>
</dbReference>
<dbReference type="GO" id="GO:0019706">
    <property type="term" value="F:protein-cysteine S-palmitoyltransferase activity"/>
    <property type="evidence" value="ECO:0000250"/>
    <property type="project" value="UniProtKB"/>
</dbReference>
<dbReference type="GO" id="GO:0140439">
    <property type="term" value="F:protein-cysteine S-stearoyltransferase activity"/>
    <property type="evidence" value="ECO:0007669"/>
    <property type="project" value="RHEA"/>
</dbReference>
<dbReference type="GO" id="GO:0044873">
    <property type="term" value="P:lipoprotein localization to membrane"/>
    <property type="evidence" value="ECO:0000315"/>
    <property type="project" value="UniProtKB"/>
</dbReference>
<dbReference type="GO" id="GO:0018230">
    <property type="term" value="P:peptidyl-L-cysteine S-palmitoylation"/>
    <property type="evidence" value="ECO:0000250"/>
    <property type="project" value="UniProtKB"/>
</dbReference>
<dbReference type="GO" id="GO:1902685">
    <property type="term" value="P:positive regulation of receptor localization to synapse"/>
    <property type="evidence" value="ECO:0000250"/>
    <property type="project" value="UniProtKB"/>
</dbReference>
<dbReference type="GO" id="GO:0032230">
    <property type="term" value="P:positive regulation of synaptic transmission, GABAergic"/>
    <property type="evidence" value="ECO:0000250"/>
    <property type="project" value="UniProtKB"/>
</dbReference>
<dbReference type="GO" id="GO:0034165">
    <property type="term" value="P:positive regulation of toll-like receptor 9 signaling pathway"/>
    <property type="evidence" value="ECO:0000314"/>
    <property type="project" value="UniProt"/>
</dbReference>
<dbReference type="GO" id="GO:0072657">
    <property type="term" value="P:protein localization to membrane"/>
    <property type="evidence" value="ECO:0000304"/>
    <property type="project" value="UniProt"/>
</dbReference>
<dbReference type="GO" id="GO:1903546">
    <property type="term" value="P:protein localization to photoreceptor outer segment"/>
    <property type="evidence" value="ECO:0000314"/>
    <property type="project" value="MGI"/>
</dbReference>
<dbReference type="GO" id="GO:0072659">
    <property type="term" value="P:protein localization to plasma membrane"/>
    <property type="evidence" value="ECO:0000314"/>
    <property type="project" value="UniProtKB"/>
</dbReference>
<dbReference type="GO" id="GO:0018345">
    <property type="term" value="P:protein palmitoylation"/>
    <property type="evidence" value="ECO:0000314"/>
    <property type="project" value="UniProtKB"/>
</dbReference>
<dbReference type="GO" id="GO:0006612">
    <property type="term" value="P:protein targeting to membrane"/>
    <property type="evidence" value="ECO:0000318"/>
    <property type="project" value="GO_Central"/>
</dbReference>
<dbReference type="GO" id="GO:0008277">
    <property type="term" value="P:regulation of G protein-coupled receptor signaling pathway"/>
    <property type="evidence" value="ECO:0000315"/>
    <property type="project" value="UniProtKB"/>
</dbReference>
<dbReference type="GO" id="GO:0036462">
    <property type="term" value="P:TRAIL-activated apoptotic signaling pathway"/>
    <property type="evidence" value="ECO:0000315"/>
    <property type="project" value="UniProtKB"/>
</dbReference>
<dbReference type="InterPro" id="IPR001594">
    <property type="entry name" value="Palmitoyltrfase_DHHC"/>
</dbReference>
<dbReference type="InterPro" id="IPR039859">
    <property type="entry name" value="PFA4/ZDH16/20/ERF2-like"/>
</dbReference>
<dbReference type="PANTHER" id="PTHR12246">
    <property type="entry name" value="PALMITOYLTRANSFERASE ZDHHC16"/>
    <property type="match status" value="1"/>
</dbReference>
<dbReference type="Pfam" id="PF01529">
    <property type="entry name" value="DHHC"/>
    <property type="match status" value="1"/>
</dbReference>
<dbReference type="PROSITE" id="PS50216">
    <property type="entry name" value="DHHC"/>
    <property type="match status" value="1"/>
</dbReference>
<protein>
    <recommendedName>
        <fullName evidence="16">Palmitoyltransferase ZDHHC3</fullName>
        <ecNumber evidence="7 10 13 19">2.3.1.225</ecNumber>
    </recommendedName>
    <alternativeName>
        <fullName evidence="2">Acyltransferase ZDHHC3</fullName>
        <ecNumber evidence="2">2.3.1.-</ecNumber>
    </alternativeName>
    <alternativeName>
        <fullName evidence="20">Protein DHHC1</fullName>
    </alternativeName>
    <alternativeName>
        <fullName evidence="23">Zinc finger DHHC domain-containing protein 3</fullName>
        <shortName evidence="21">DHHC-3</shortName>
    </alternativeName>
</protein>
<organism>
    <name type="scientific">Homo sapiens</name>
    <name type="common">Human</name>
    <dbReference type="NCBI Taxonomy" id="9606"/>
    <lineage>
        <taxon>Eukaryota</taxon>
        <taxon>Metazoa</taxon>
        <taxon>Chordata</taxon>
        <taxon>Craniata</taxon>
        <taxon>Vertebrata</taxon>
        <taxon>Euteleostomi</taxon>
        <taxon>Mammalia</taxon>
        <taxon>Eutheria</taxon>
        <taxon>Euarchontoglires</taxon>
        <taxon>Primates</taxon>
        <taxon>Haplorrhini</taxon>
        <taxon>Catarrhini</taxon>
        <taxon>Hominidae</taxon>
        <taxon>Homo</taxon>
    </lineage>
</organism>
<comment type="function">
    <text evidence="2 6 7 8 9 10 11 12 13">Golgi-localized palmitoyltransferase that catalyzes the addition of palmitate onto various protein substrates (PubMed:19001095, PubMed:21926431, PubMed:22240897, PubMed:22314500, PubMed:23034182). Has no stringent fatty acid selectivity and in addition to palmitate can also transfer onto target proteins myristate from tetradecanoyl-CoA and stearate from octadecanoyl-CoA (By similarity). Plays an important role in G protein-coupled receptor signaling pathways involving GNAQ and potentially other heterotrimeric G proteins by regulating their dynamic association with the plasma membrane (PubMed:19001095). Palmitoylates ITGA6 and ITGB4, thereby regulating the alpha-6/beta-4 integrin localization, expression and function in cell adhesion to laminin (PubMed:22314500). Plays a role in the TRAIL-activated apoptotic signaling pathway most probably through the palmitoylation and localization to the plasma membrane of TNFRSF10A (PubMed:22240897). In the brain, by palmitoylating the gamma subunit GABRG2 of GABA(A) receptors and regulating their postsynaptic accumulation, plays a role in synaptic GABAergic inhibitory function and GABAergic innervation (By similarity). Palmitoylates the neuronal protein GAP43 which is also involved in the formation of GABAergic synapses (By similarity). Palmitoylates NCDN thereby regulating its association with endosome membranes (By similarity). Probably palmitoylates PRCD and is involved in its proper localization within the photoreceptor (By similarity). Could mediate the palmitoylation of NCAM1 and regulate neurite outgrowth (By similarity). Could palmitoylate DNAJC5 and regulate its localization to Golgi membranes (By similarity). Also constitutively palmitoylates DLG4 (By similarity). May also palmitoylate SNAP25 (By similarity). Could palmitoylate the glutamate receptors GRIA1 and GRIA2 but this has not been confirmed in vivo (By similarity). Could also palmitoylate the D(2) dopamine receptor DRD2 (PubMed:26535572). May also palmitoylate LAMTOR1, promoting its localization to lysosomal membranes (PubMed:35893977). Palmitoylates the Toll-like receptor 9/TLR9 in the Golgi and thereby regulates TLR9 trafficking to endosomes (PubMed:38169466). May palmitoylate CALHM1 and CALHM3 subunits of gustatory voltage-gated ion channels and modulate channel gating and kinetics.</text>
</comment>
<comment type="function">
    <text evidence="2">May also function as a calcium transporter.</text>
</comment>
<comment type="catalytic activity">
    <reaction evidence="7 10 13 19">
        <text>L-cysteinyl-[protein] + hexadecanoyl-CoA = S-hexadecanoyl-L-cysteinyl-[protein] + CoA</text>
        <dbReference type="Rhea" id="RHEA:36683"/>
        <dbReference type="Rhea" id="RHEA-COMP:10131"/>
        <dbReference type="Rhea" id="RHEA-COMP:11032"/>
        <dbReference type="ChEBI" id="CHEBI:29950"/>
        <dbReference type="ChEBI" id="CHEBI:57287"/>
        <dbReference type="ChEBI" id="CHEBI:57379"/>
        <dbReference type="ChEBI" id="CHEBI:74151"/>
        <dbReference type="EC" id="2.3.1.225"/>
    </reaction>
    <physiologicalReaction direction="left-to-right" evidence="17">
        <dbReference type="Rhea" id="RHEA:36684"/>
    </physiologicalReaction>
</comment>
<comment type="catalytic activity">
    <reaction evidence="2">
        <text>L-cysteinyl-[protein] + tetradecanoyl-CoA = S-tetradecanoyl-L-cysteinyl-[protein] + CoA</text>
        <dbReference type="Rhea" id="RHEA:59736"/>
        <dbReference type="Rhea" id="RHEA-COMP:10131"/>
        <dbReference type="Rhea" id="RHEA-COMP:15433"/>
        <dbReference type="ChEBI" id="CHEBI:29950"/>
        <dbReference type="ChEBI" id="CHEBI:57287"/>
        <dbReference type="ChEBI" id="CHEBI:57385"/>
        <dbReference type="ChEBI" id="CHEBI:143199"/>
    </reaction>
    <physiologicalReaction direction="left-to-right" evidence="2">
        <dbReference type="Rhea" id="RHEA:59737"/>
    </physiologicalReaction>
</comment>
<comment type="catalytic activity">
    <reaction evidence="2">
        <text>L-cysteinyl-[protein] + octadecanoyl-CoA = S-octadecanoyl-L-cysteinyl-[protein] + CoA</text>
        <dbReference type="Rhea" id="RHEA:59740"/>
        <dbReference type="Rhea" id="RHEA-COMP:10131"/>
        <dbReference type="Rhea" id="RHEA-COMP:15434"/>
        <dbReference type="ChEBI" id="CHEBI:29950"/>
        <dbReference type="ChEBI" id="CHEBI:57287"/>
        <dbReference type="ChEBI" id="CHEBI:57394"/>
        <dbReference type="ChEBI" id="CHEBI:143200"/>
    </reaction>
    <physiologicalReaction direction="left-to-right" evidence="2">
        <dbReference type="Rhea" id="RHEA:59741"/>
    </physiologicalReaction>
</comment>
<comment type="subunit">
    <text evidence="2 8">Monomer. Homooligomers. The monomeric form has a higher catalytic activity. Forms heterooligomers with ZDHHC7 (By similarity). Interacts with TNFRSF10A (PubMed:22240897).</text>
</comment>
<comment type="subcellular location">
    <subcellularLocation>
        <location evidence="5 6 7 11">Golgi apparatus membrane</location>
        <topology evidence="3">Multi-pass membrane protein</topology>
    </subcellularLocation>
    <text evidence="2">Localizes to the Golgi cis cisterna.</text>
</comment>
<comment type="alternative products">
    <event type="alternative splicing"/>
    <isoform>
        <id>Q9NYG2-1</id>
        <name>1</name>
        <sequence type="displayed"/>
    </isoform>
    <isoform>
        <id>Q9NYG2-2</id>
        <name>2</name>
        <sequence type="described" ref="VSP_006934"/>
    </isoform>
</comment>
<comment type="tissue specificity">
    <text evidence="5">Widely expressed with significant expression in heart, lung, liver, skeletal muscle, kidney, testis, thymus, small intestine and leukocyte.</text>
</comment>
<comment type="domain">
    <text evidence="1">The DHHC domain is required for palmitoyltransferase activity.</text>
</comment>
<comment type="PTM">
    <text evidence="7">Autopalmitoylated.</text>
</comment>
<comment type="PTM">
    <text evidence="2">Phosphorylation by FGFR1 and SRC probably regulates the palmitoyltransferase activity.</text>
</comment>
<comment type="similarity">
    <text evidence="16">Belongs to the DHHC palmitoyltransferase family.</text>
</comment>
<accession>Q9NYG2</accession>
<accession>Q53A17</accession>
<accession>Q96BL0</accession>
<gene>
    <name evidence="23" type="primary">ZDHHC3</name>
    <name evidence="22" type="ORF">HSD49</name>
</gene>
<keyword id="KW-0012">Acyltransferase</keyword>
<keyword id="KW-0025">Alternative splicing</keyword>
<keyword id="KW-0333">Golgi apparatus</keyword>
<keyword id="KW-0449">Lipoprotein</keyword>
<keyword id="KW-0472">Membrane</keyword>
<keyword id="KW-0564">Palmitate</keyword>
<keyword id="KW-0597">Phosphoprotein</keyword>
<keyword id="KW-1267">Proteomics identification</keyword>
<keyword id="KW-1185">Reference proteome</keyword>
<keyword id="KW-0808">Transferase</keyword>
<keyword id="KW-0812">Transmembrane</keyword>
<keyword id="KW-1133">Transmembrane helix</keyword>
<reference key="1">
    <citation type="submission" date="2000-03" db="EMBL/GenBank/DDBJ databases">
        <title>DHHC domain-containing protein from human T-cell.</title>
        <authorList>
            <person name="Hameed K.S."/>
            <person name="Greenberg A.H."/>
        </authorList>
    </citation>
    <scope>NUCLEOTIDE SEQUENCE [MRNA] (ISOFORM 2)</scope>
</reference>
<reference key="2">
    <citation type="submission" date="2001-10" db="EMBL/GenBank/DDBJ databases">
        <authorList>
            <person name="Hong G.S."/>
            <person name="Jung Y.K."/>
        </authorList>
    </citation>
    <scope>NUCLEOTIDE SEQUENCE [MRNA] (ISOFORM 1)</scope>
    <source>
        <tissue>Thymus</tissue>
    </source>
</reference>
<reference key="3">
    <citation type="journal article" date="2004" name="Genome Res.">
        <title>The status, quality, and expansion of the NIH full-length cDNA project: the Mammalian Gene Collection (MGC).</title>
        <authorList>
            <consortium name="The MGC Project Team"/>
        </authorList>
    </citation>
    <scope>NUCLEOTIDE SEQUENCE [LARGE SCALE MRNA] (ISOFORM 1)</scope>
    <source>
        <tissue>Colon</tissue>
    </source>
</reference>
<reference key="4">
    <citation type="submission" date="2004-04" db="EMBL/GenBank/DDBJ databases">
        <title>A new spermatogenesis-related gene.</title>
        <authorList>
            <person name="Yuan L.G."/>
            <person name="Tian Y.Q."/>
            <person name="Qiao Y."/>
            <person name="Miao S.Y."/>
            <person name="Wang L.F."/>
        </authorList>
    </citation>
    <scope>NUCLEOTIDE SEQUENCE [LARGE SCALE MRNA] OF 103-284 (ISOFORM 2)</scope>
    <source>
        <tissue>Testis</tissue>
    </source>
</reference>
<reference key="5">
    <citation type="journal article" date="2006" name="Biochim. Biophys. Acta">
        <title>Intracellular localization and tissue-specific distribution of human and yeast DHHC cysteine-rich domain-containing proteins.</title>
        <authorList>
            <person name="Ohno Y."/>
            <person name="Kihara A."/>
            <person name="Sano T."/>
            <person name="Igarashi Y."/>
        </authorList>
    </citation>
    <scope>SUBCELLULAR LOCATION</scope>
    <scope>TISSUE SPECIFICITY</scope>
</reference>
<reference key="6">
    <citation type="journal article" date="2009" name="Mol. Cell. Biol.">
        <title>Identification of G protein alpha subunit-palmitoylating enzyme.</title>
        <authorList>
            <person name="Tsutsumi R."/>
            <person name="Fukata Y."/>
            <person name="Noritake J."/>
            <person name="Iwanaga T."/>
            <person name="Perez F."/>
            <person name="Fukata M."/>
        </authorList>
    </citation>
    <scope>FUNCTION</scope>
    <scope>SUBCELLULAR LOCATION</scope>
</reference>
<reference key="7">
    <citation type="journal article" date="2009" name="Science">
        <title>Lysine acetylation targets protein complexes and co-regulates major cellular functions.</title>
        <authorList>
            <person name="Choudhary C."/>
            <person name="Kumar C."/>
            <person name="Gnad F."/>
            <person name="Nielsen M.L."/>
            <person name="Rehman M."/>
            <person name="Walther T.C."/>
            <person name="Olsen J.V."/>
            <person name="Mann M."/>
        </authorList>
    </citation>
    <scope>IDENTIFICATION BY MASS SPECTROMETRY [LARGE SCALE ANALYSIS]</scope>
</reference>
<reference key="8">
    <citation type="journal article" date="2011" name="J. Biol. Chem.">
        <title>Endoplasmic reticulum localization of DHHC palmitoyltransferases mediated by lysine-based sorting signals.</title>
        <authorList>
            <person name="Gorleku O.A."/>
            <person name="Barns A.M."/>
            <person name="Prescott G.R."/>
            <person name="Greaves J."/>
            <person name="Chamberlain L.H."/>
        </authorList>
    </citation>
    <scope>FUNCTION</scope>
    <scope>CATALYTIC ACTIVITY</scope>
    <scope>SUBCELLULAR LOCATION</scope>
    <scope>PALMITOYLATION</scope>
    <scope>MUTAGENESIS OF VAL-299</scope>
</reference>
<reference key="9">
    <citation type="journal article" date="2012" name="Cell Death Differ.">
        <title>Regulation in the targeting of TRAIL receptor 1 to cell surface via GODZ for TRAIL sensitivity in tumor cells.</title>
        <authorList>
            <person name="Oh Y."/>
            <person name="Jeon Y.J."/>
            <person name="Hong G.S."/>
            <person name="Kim I."/>
            <person name="Woo H.N."/>
            <person name="Jung Y.K."/>
        </authorList>
    </citation>
    <scope>FUNCTION</scope>
    <scope>SUBUNIT</scope>
    <scope>ACTIVE SITE</scope>
    <scope>MUTAGENESIS OF HIS-155 AND CYS-157</scope>
</reference>
<reference key="10">
    <citation type="journal article" date="2012" name="Cell. Mol. Life Sci.">
        <title>Palmitoylation by DHHC3 is critical for the function, expression, and stability of integrin alpha6beta4.</title>
        <authorList>
            <person name="Sharma C."/>
            <person name="Rabinovitz I."/>
            <person name="Hemler M.E."/>
        </authorList>
    </citation>
    <scope>FUNCTION</scope>
</reference>
<reference key="11">
    <citation type="journal article" date="2012" name="Mol. Biol. Cell">
        <title>Analysis of substrate specificity of human DHHC protein acyltransferases using a yeast expression system.</title>
        <authorList>
            <person name="Ohno Y."/>
            <person name="Kashio A."/>
            <person name="Ogata R."/>
            <person name="Ishitomi A."/>
            <person name="Yamazaki Y."/>
            <person name="Kihara A."/>
        </authorList>
    </citation>
    <scope>FUNCTION</scope>
    <scope>CATALYTIC ACTIVITY</scope>
</reference>
<reference key="12">
    <citation type="journal article" date="2015" name="PLoS ONE">
        <title>Effect of C-Terminal S-Palmitoylation on D2 Dopamine Receptor Trafficking and Stability.</title>
        <authorList>
            <person name="Ebersole B."/>
            <person name="Petko J."/>
            <person name="Woll M."/>
            <person name="Murakami S."/>
            <person name="Sokolina K."/>
            <person name="Wong V."/>
            <person name="Stagljar I."/>
            <person name="Luescher B."/>
            <person name="Levenson R."/>
        </authorList>
    </citation>
    <scope>FUNCTION</scope>
    <scope>SUBCELLULAR LOCATION</scope>
</reference>
<reference key="13">
    <citation type="journal article" date="2022" name="Polymers (Basel)">
        <title>Structural exploration on palmitoyltransferase DHHC3 from Homo sapiens.</title>
        <authorList>
            <person name="Tang M."/>
            <person name="Xia Y."/>
            <person name="Xiao T."/>
            <person name="Cao R."/>
            <person name="Cao Y."/>
            <person name="Ouyang B."/>
        </authorList>
    </citation>
    <scope>FUNCTION</scope>
    <scope>CATALYTIC ACTIVITY</scope>
    <scope>ACTIVE SITE</scope>
    <scope>MUTAGENESIS OF CYS-157</scope>
</reference>
<reference key="14">
    <citation type="journal article" date="2024" name="Nat. Commun.">
        <title>Cyclical palmitoylation regulates TLR9 signalling and systemic autoimmunity in mice.</title>
        <authorList>
            <person name="Ni H."/>
            <person name="Wang Y."/>
            <person name="Yao K."/>
            <person name="Wang L."/>
            <person name="Huang J."/>
            <person name="Xiao Y."/>
            <person name="Chen H."/>
            <person name="Liu B."/>
            <person name="Yang C.Y."/>
            <person name="Zhao J."/>
        </authorList>
    </citation>
    <scope>FUNCTION</scope>
    <scope>CATALYTIC ACTIVITY</scope>
</reference>
<sequence>MMLIPTHHFRNIERKPEYLQPEKCVPPPYPGPVGTMWFIRDGCGIACAIVTWFLVLYAEFVVLFVMLIPSRDYVYSIINGIVFNLLAFLALASHCRAMLTDPGAVPKGNATKEFIESLQLKPGQVVYKCPKCCSIKPDRAHHCSVCKRCIRKMDHHCPWVNNCVGENNQKYFVLFTMYIALISLHALIMVGFHFLHCFEEDWTKCSSFSPPTTVILLILLCFEGLLFLIFTSVMFGTQVHSICTDETGIEQLKKEERRWAKKTKWMNMKAVFGHPFSLGWASPFATPDQGKADPYQYVV</sequence>
<evidence type="ECO:0000250" key="1">
    <source>
        <dbReference type="UniProtKB" id="Q8IUH5"/>
    </source>
</evidence>
<evidence type="ECO:0000250" key="2">
    <source>
        <dbReference type="UniProtKB" id="Q8R173"/>
    </source>
</evidence>
<evidence type="ECO:0000255" key="3"/>
<evidence type="ECO:0000255" key="4">
    <source>
        <dbReference type="PROSITE-ProRule" id="PRU00067"/>
    </source>
</evidence>
<evidence type="ECO:0000269" key="5">
    <source>
    </source>
</evidence>
<evidence type="ECO:0000269" key="6">
    <source>
    </source>
</evidence>
<evidence type="ECO:0000269" key="7">
    <source>
    </source>
</evidence>
<evidence type="ECO:0000269" key="8">
    <source>
    </source>
</evidence>
<evidence type="ECO:0000269" key="9">
    <source>
    </source>
</evidence>
<evidence type="ECO:0000269" key="10">
    <source>
    </source>
</evidence>
<evidence type="ECO:0000269" key="11">
    <source>
    </source>
</evidence>
<evidence type="ECO:0000269" key="12">
    <source>
    </source>
</evidence>
<evidence type="ECO:0000269" key="13">
    <source>
    </source>
</evidence>
<evidence type="ECO:0000303" key="14">
    <source ref="1"/>
</evidence>
<evidence type="ECO:0000303" key="15">
    <source ref="4"/>
</evidence>
<evidence type="ECO:0000305" key="16"/>
<evidence type="ECO:0000305" key="17">
    <source>
    </source>
</evidence>
<evidence type="ECO:0000305" key="18">
    <source>
    </source>
</evidence>
<evidence type="ECO:0000305" key="19">
    <source>
    </source>
</evidence>
<evidence type="ECO:0000312" key="20">
    <source>
        <dbReference type="EMBL" id="AAF63570.1"/>
    </source>
</evidence>
<evidence type="ECO:0000312" key="21">
    <source>
        <dbReference type="EMBL" id="AAH15467.1"/>
    </source>
</evidence>
<evidence type="ECO:0000312" key="22">
    <source>
        <dbReference type="EMBL" id="AAV83779.1"/>
    </source>
</evidence>
<evidence type="ECO:0000312" key="23">
    <source>
        <dbReference type="HGNC" id="HGNC:18470"/>
    </source>
</evidence>